<gene>
    <name evidence="1" type="primary">rpmH</name>
    <name type="ordered locus">SACE_7397</name>
</gene>
<sequence>MSKGKRTFQPNNRRRARKHGFRLRMRTRAGRAIVAGRRRRGRASLTA</sequence>
<reference key="1">
    <citation type="journal article" date="2007" name="Nat. Biotechnol.">
        <title>Complete genome sequence of the erythromycin-producing bacterium Saccharopolyspora erythraea NRRL23338.</title>
        <authorList>
            <person name="Oliynyk M."/>
            <person name="Samborskyy M."/>
            <person name="Lester J.B."/>
            <person name="Mironenko T."/>
            <person name="Scott N."/>
            <person name="Dickens S."/>
            <person name="Haydock S.F."/>
            <person name="Leadlay P.F."/>
        </authorList>
    </citation>
    <scope>NUCLEOTIDE SEQUENCE [LARGE SCALE GENOMIC DNA]</scope>
    <source>
        <strain>ATCC 11635 / DSM 40517 / JCM 4748 / NBRC 13426 / NCIMB 8594 / NRRL 2338</strain>
    </source>
</reference>
<feature type="chain" id="PRO_1000013436" description="Large ribosomal subunit protein bL34">
    <location>
        <begin position="1"/>
        <end position="47"/>
    </location>
</feature>
<feature type="region of interest" description="Disordered" evidence="2">
    <location>
        <begin position="1"/>
        <end position="30"/>
    </location>
</feature>
<feature type="compositionally biased region" description="Basic residues" evidence="2">
    <location>
        <begin position="1"/>
        <end position="29"/>
    </location>
</feature>
<name>RL34_SACEN</name>
<protein>
    <recommendedName>
        <fullName evidence="1">Large ribosomal subunit protein bL34</fullName>
    </recommendedName>
    <alternativeName>
        <fullName evidence="3">50S ribosomal protein L34</fullName>
    </alternativeName>
</protein>
<accession>A4FR78</accession>
<organism>
    <name type="scientific">Saccharopolyspora erythraea (strain ATCC 11635 / DSM 40517 / JCM 4748 / NBRC 13426 / NCIMB 8594 / NRRL 2338)</name>
    <dbReference type="NCBI Taxonomy" id="405948"/>
    <lineage>
        <taxon>Bacteria</taxon>
        <taxon>Bacillati</taxon>
        <taxon>Actinomycetota</taxon>
        <taxon>Actinomycetes</taxon>
        <taxon>Pseudonocardiales</taxon>
        <taxon>Pseudonocardiaceae</taxon>
        <taxon>Saccharopolyspora</taxon>
    </lineage>
</organism>
<keyword id="KW-1185">Reference proteome</keyword>
<keyword id="KW-0687">Ribonucleoprotein</keyword>
<keyword id="KW-0689">Ribosomal protein</keyword>
<dbReference type="EMBL" id="AM420293">
    <property type="protein sequence ID" value="CAM06553.1"/>
    <property type="molecule type" value="Genomic_DNA"/>
</dbReference>
<dbReference type="RefSeq" id="WP_011875345.1">
    <property type="nucleotide sequence ID" value="NC_009142.1"/>
</dbReference>
<dbReference type="SMR" id="A4FR78"/>
<dbReference type="STRING" id="405948.SACE_7397"/>
<dbReference type="KEGG" id="sen:SACE_7397"/>
<dbReference type="eggNOG" id="COG0230">
    <property type="taxonomic scope" value="Bacteria"/>
</dbReference>
<dbReference type="HOGENOM" id="CLU_129938_2_1_11"/>
<dbReference type="Proteomes" id="UP000006728">
    <property type="component" value="Chromosome"/>
</dbReference>
<dbReference type="GO" id="GO:1990904">
    <property type="term" value="C:ribonucleoprotein complex"/>
    <property type="evidence" value="ECO:0007669"/>
    <property type="project" value="UniProtKB-KW"/>
</dbReference>
<dbReference type="GO" id="GO:0005840">
    <property type="term" value="C:ribosome"/>
    <property type="evidence" value="ECO:0007669"/>
    <property type="project" value="UniProtKB-KW"/>
</dbReference>
<dbReference type="GO" id="GO:0003735">
    <property type="term" value="F:structural constituent of ribosome"/>
    <property type="evidence" value="ECO:0007669"/>
    <property type="project" value="InterPro"/>
</dbReference>
<dbReference type="GO" id="GO:0006412">
    <property type="term" value="P:translation"/>
    <property type="evidence" value="ECO:0007669"/>
    <property type="project" value="UniProtKB-UniRule"/>
</dbReference>
<dbReference type="FunFam" id="1.10.287.3980:FF:000001">
    <property type="entry name" value="Mitochondrial ribosomal protein L34"/>
    <property type="match status" value="1"/>
</dbReference>
<dbReference type="Gene3D" id="1.10.287.3980">
    <property type="match status" value="1"/>
</dbReference>
<dbReference type="HAMAP" id="MF_00391">
    <property type="entry name" value="Ribosomal_bL34"/>
    <property type="match status" value="1"/>
</dbReference>
<dbReference type="InterPro" id="IPR000271">
    <property type="entry name" value="Ribosomal_bL34"/>
</dbReference>
<dbReference type="InterPro" id="IPR020939">
    <property type="entry name" value="Ribosomal_bL34_CS"/>
</dbReference>
<dbReference type="NCBIfam" id="TIGR01030">
    <property type="entry name" value="rpmH_bact"/>
    <property type="match status" value="1"/>
</dbReference>
<dbReference type="PANTHER" id="PTHR14503:SF4">
    <property type="entry name" value="LARGE RIBOSOMAL SUBUNIT PROTEIN BL34M"/>
    <property type="match status" value="1"/>
</dbReference>
<dbReference type="PANTHER" id="PTHR14503">
    <property type="entry name" value="MITOCHONDRIAL RIBOSOMAL PROTEIN 34 FAMILY MEMBER"/>
    <property type="match status" value="1"/>
</dbReference>
<dbReference type="Pfam" id="PF00468">
    <property type="entry name" value="Ribosomal_L34"/>
    <property type="match status" value="1"/>
</dbReference>
<dbReference type="PROSITE" id="PS00784">
    <property type="entry name" value="RIBOSOMAL_L34"/>
    <property type="match status" value="1"/>
</dbReference>
<evidence type="ECO:0000255" key="1">
    <source>
        <dbReference type="HAMAP-Rule" id="MF_00391"/>
    </source>
</evidence>
<evidence type="ECO:0000256" key="2">
    <source>
        <dbReference type="SAM" id="MobiDB-lite"/>
    </source>
</evidence>
<evidence type="ECO:0000305" key="3"/>
<proteinExistence type="inferred from homology"/>
<comment type="similarity">
    <text evidence="1">Belongs to the bacterial ribosomal protein bL34 family.</text>
</comment>